<feature type="chain" id="PRO_0000357060" description="Methylthioribulose-1-phosphate dehydratase">
    <location>
        <begin position="1"/>
        <end position="211"/>
    </location>
</feature>
<feature type="binding site" evidence="1">
    <location>
        <position position="105"/>
    </location>
    <ligand>
        <name>Zn(2+)</name>
        <dbReference type="ChEBI" id="CHEBI:29105"/>
    </ligand>
</feature>
<feature type="binding site" evidence="1">
    <location>
        <position position="107"/>
    </location>
    <ligand>
        <name>Zn(2+)</name>
        <dbReference type="ChEBI" id="CHEBI:29105"/>
    </ligand>
</feature>
<keyword id="KW-0028">Amino-acid biosynthesis</keyword>
<keyword id="KW-0456">Lyase</keyword>
<keyword id="KW-0479">Metal-binding</keyword>
<keyword id="KW-0486">Methionine biosynthesis</keyword>
<keyword id="KW-1185">Reference proteome</keyword>
<keyword id="KW-0862">Zinc</keyword>
<reference key="1">
    <citation type="submission" date="2007-05" db="EMBL/GenBank/DDBJ databases">
        <title>Complete sequence of chromosome of Acidiphilium cryptum JF-5.</title>
        <authorList>
            <consortium name="US DOE Joint Genome Institute"/>
            <person name="Copeland A."/>
            <person name="Lucas S."/>
            <person name="Lapidus A."/>
            <person name="Barry K."/>
            <person name="Detter J.C."/>
            <person name="Glavina del Rio T."/>
            <person name="Hammon N."/>
            <person name="Israni S."/>
            <person name="Dalin E."/>
            <person name="Tice H."/>
            <person name="Pitluck S."/>
            <person name="Sims D."/>
            <person name="Brettin T."/>
            <person name="Bruce D."/>
            <person name="Han C."/>
            <person name="Schmutz J."/>
            <person name="Larimer F."/>
            <person name="Land M."/>
            <person name="Hauser L."/>
            <person name="Kyrpides N."/>
            <person name="Kim E."/>
            <person name="Magnuson T."/>
            <person name="Richardson P."/>
        </authorList>
    </citation>
    <scope>NUCLEOTIDE SEQUENCE [LARGE SCALE GENOMIC DNA]</scope>
    <source>
        <strain>JF-5</strain>
    </source>
</reference>
<protein>
    <recommendedName>
        <fullName evidence="1">Methylthioribulose-1-phosphate dehydratase</fullName>
        <shortName evidence="1">MTRu-1-P dehydratase</shortName>
        <ecNumber evidence="1">4.2.1.109</ecNumber>
    </recommendedName>
</protein>
<dbReference type="EC" id="4.2.1.109" evidence="1"/>
<dbReference type="EMBL" id="CP000697">
    <property type="protein sequence ID" value="ABQ29246.1"/>
    <property type="status" value="ALT_INIT"/>
    <property type="molecule type" value="Genomic_DNA"/>
</dbReference>
<dbReference type="SMR" id="A5FUG4"/>
<dbReference type="STRING" id="349163.Acry_0017"/>
<dbReference type="KEGG" id="acr:Acry_0017"/>
<dbReference type="eggNOG" id="COG0235">
    <property type="taxonomic scope" value="Bacteria"/>
</dbReference>
<dbReference type="HOGENOM" id="CLU_006033_4_1_5"/>
<dbReference type="UniPathway" id="UPA00904">
    <property type="reaction ID" value="UER00875"/>
</dbReference>
<dbReference type="Proteomes" id="UP000000245">
    <property type="component" value="Chromosome"/>
</dbReference>
<dbReference type="GO" id="GO:0005829">
    <property type="term" value="C:cytosol"/>
    <property type="evidence" value="ECO:0007669"/>
    <property type="project" value="TreeGrafter"/>
</dbReference>
<dbReference type="GO" id="GO:0016832">
    <property type="term" value="F:aldehyde-lyase activity"/>
    <property type="evidence" value="ECO:0007669"/>
    <property type="project" value="TreeGrafter"/>
</dbReference>
<dbReference type="GO" id="GO:0046570">
    <property type="term" value="F:methylthioribulose 1-phosphate dehydratase activity"/>
    <property type="evidence" value="ECO:0007669"/>
    <property type="project" value="UniProtKB-UniRule"/>
</dbReference>
<dbReference type="GO" id="GO:0008270">
    <property type="term" value="F:zinc ion binding"/>
    <property type="evidence" value="ECO:0007669"/>
    <property type="project" value="UniProtKB-UniRule"/>
</dbReference>
<dbReference type="GO" id="GO:0019509">
    <property type="term" value="P:L-methionine salvage from methylthioadenosine"/>
    <property type="evidence" value="ECO:0007669"/>
    <property type="project" value="UniProtKB-UniRule"/>
</dbReference>
<dbReference type="GO" id="GO:0019323">
    <property type="term" value="P:pentose catabolic process"/>
    <property type="evidence" value="ECO:0007669"/>
    <property type="project" value="TreeGrafter"/>
</dbReference>
<dbReference type="Gene3D" id="3.40.225.10">
    <property type="entry name" value="Class II aldolase/adducin N-terminal domain"/>
    <property type="match status" value="1"/>
</dbReference>
<dbReference type="HAMAP" id="MF_01677">
    <property type="entry name" value="Salvage_MtnB"/>
    <property type="match status" value="1"/>
</dbReference>
<dbReference type="InterPro" id="IPR050197">
    <property type="entry name" value="Aldolase_class_II_sugar_metab"/>
</dbReference>
<dbReference type="InterPro" id="IPR001303">
    <property type="entry name" value="Aldolase_II/adducin_N"/>
</dbReference>
<dbReference type="InterPro" id="IPR036409">
    <property type="entry name" value="Aldolase_II/adducin_N_sf"/>
</dbReference>
<dbReference type="InterPro" id="IPR017714">
    <property type="entry name" value="MethylthioRu-1-P_deHdtase_MtnB"/>
</dbReference>
<dbReference type="NCBIfam" id="NF006672">
    <property type="entry name" value="PRK09220.1"/>
    <property type="match status" value="1"/>
</dbReference>
<dbReference type="NCBIfam" id="TIGR03328">
    <property type="entry name" value="salvage_mtnB"/>
    <property type="match status" value="1"/>
</dbReference>
<dbReference type="PANTHER" id="PTHR22789:SF0">
    <property type="entry name" value="3-OXO-TETRONATE 4-PHOSPHATE DECARBOXYLASE-RELATED"/>
    <property type="match status" value="1"/>
</dbReference>
<dbReference type="PANTHER" id="PTHR22789">
    <property type="entry name" value="FUCULOSE PHOSPHATE ALDOLASE"/>
    <property type="match status" value="1"/>
</dbReference>
<dbReference type="Pfam" id="PF00596">
    <property type="entry name" value="Aldolase_II"/>
    <property type="match status" value="1"/>
</dbReference>
<dbReference type="SMART" id="SM01007">
    <property type="entry name" value="Aldolase_II"/>
    <property type="match status" value="1"/>
</dbReference>
<dbReference type="SUPFAM" id="SSF53639">
    <property type="entry name" value="AraD/HMP-PK domain-like"/>
    <property type="match status" value="1"/>
</dbReference>
<sequence>MTLAAGPAEAGDVLASRARELVAIGARMDARGWVPASAGNLSARCTADSIAITRSGVHKGRLEAADIIEVWLDGTPLRAGDRPSAETQLHCQVYERLPAAGAVLHGHSVAATALTLADNSPGIVLEGYEILKAFPGIATHETRIVLPVFDNDQDMRRLAAAIAPAFAAPPIGYVLRGHGIYAWGEDVERCFWRLEALEFLLSCECERRRMR</sequence>
<evidence type="ECO:0000255" key="1">
    <source>
        <dbReference type="HAMAP-Rule" id="MF_01677"/>
    </source>
</evidence>
<evidence type="ECO:0000305" key="2"/>
<accession>A5FUG4</accession>
<proteinExistence type="inferred from homology"/>
<organism>
    <name type="scientific">Acidiphilium cryptum (strain JF-5)</name>
    <dbReference type="NCBI Taxonomy" id="349163"/>
    <lineage>
        <taxon>Bacteria</taxon>
        <taxon>Pseudomonadati</taxon>
        <taxon>Pseudomonadota</taxon>
        <taxon>Alphaproteobacteria</taxon>
        <taxon>Acetobacterales</taxon>
        <taxon>Acidocellaceae</taxon>
        <taxon>Acidiphilium</taxon>
    </lineage>
</organism>
<gene>
    <name evidence="1" type="primary">mtnB</name>
    <name type="ordered locus">Acry_0017</name>
</gene>
<comment type="function">
    <text evidence="1">Catalyzes the dehydration of methylthioribulose-1-phosphate (MTRu-1-P) into 2,3-diketo-5-methylthiopentyl-1-phosphate (DK-MTP-1-P).</text>
</comment>
<comment type="catalytic activity">
    <reaction evidence="1">
        <text>5-(methylsulfanyl)-D-ribulose 1-phosphate = 5-methylsulfanyl-2,3-dioxopentyl phosphate + H2O</text>
        <dbReference type="Rhea" id="RHEA:15549"/>
        <dbReference type="ChEBI" id="CHEBI:15377"/>
        <dbReference type="ChEBI" id="CHEBI:58548"/>
        <dbReference type="ChEBI" id="CHEBI:58828"/>
        <dbReference type="EC" id="4.2.1.109"/>
    </reaction>
</comment>
<comment type="cofactor">
    <cofactor evidence="1">
        <name>Zn(2+)</name>
        <dbReference type="ChEBI" id="CHEBI:29105"/>
    </cofactor>
    <text evidence="1">Binds 1 zinc ion per subunit.</text>
</comment>
<comment type="pathway">
    <text evidence="1">Amino-acid biosynthesis; L-methionine biosynthesis via salvage pathway; L-methionine from S-methyl-5-thio-alpha-D-ribose 1-phosphate: step 2/6.</text>
</comment>
<comment type="similarity">
    <text evidence="1">Belongs to the aldolase class II family. MtnB subfamily.</text>
</comment>
<comment type="sequence caution" evidence="2">
    <conflict type="erroneous initiation">
        <sequence resource="EMBL-CDS" id="ABQ29246"/>
    </conflict>
</comment>
<name>MTNB_ACICJ</name>